<feature type="chain" id="PRO_0000079792" description="Tethering factor for nuclear proteasome STS1">
    <location>
        <begin position="1"/>
        <end position="319"/>
    </location>
</feature>
<feature type="region of interest" description="Disordered" evidence="1">
    <location>
        <begin position="33"/>
        <end position="76"/>
    </location>
</feature>
<feature type="sequence conflict" description="In Ref. 2; CAA53515." evidence="9" ref="2">
    <original>V</original>
    <variation>I</variation>
    <location>
        <position position="231"/>
    </location>
</feature>
<protein>
    <recommendedName>
        <fullName>Tethering factor for nuclear proteasome STS1</fullName>
    </recommendedName>
    <alternativeName>
        <fullName>Dumbbell former protein 8</fullName>
    </alternativeName>
    <alternativeName>
        <fullName>SEC23 suppressor 1</fullName>
    </alternativeName>
</protein>
<sequence>MMGFEWGFKPSSKITQSTVSSQGTGNVMIPTAGVKQKRRYANEEQEEEELPRNKNVMKYGGVSKRRPQPGSLIRGQPLPLQRGMELMNKNQLQQLLVDLMTKHPEIQQSVHTRVIGLDFSIQKCLDMLKQKSEAVYQSIPYNRSYESNKLDDYAFVRMKPQILEFLNCLVDFILDNIPPRLENLHASLKFLDICTELVIKLPRFELASNNYYYDKCIEQLSHVWCTLIEHVARDRIILLADNSSVWKSHMTRLQVYNEHSNGLLERPLQLFKSLDMGSPSAASSSTLSLQESIIYHHDTMTANENNNNSGSAATDSPFN</sequence>
<gene>
    <name type="primary">STS1</name>
    <name type="synonym">DBF8</name>
    <name type="synonym">SSM5</name>
    <name type="ordered locus">YIR011C</name>
    <name type="ORF">YIB11C</name>
</gene>
<reference key="1">
    <citation type="journal article" date="1994" name="Mol. Cell. Biol.">
        <title>DBF8, an essential gene required for efficient chromosome segregation in Saccharomyces cerevisiae.</title>
        <authorList>
            <person name="Houman F."/>
            <person name="Holm C."/>
        </authorList>
    </citation>
    <scope>NUCLEOTIDE SEQUENCE [GENOMIC DNA]</scope>
    <scope>FUNCTION</scope>
    <source>
        <strain>ATCC 204508 / S288c</strain>
    </source>
</reference>
<reference key="2">
    <citation type="journal article" date="1993" name="Eur. J. Cell Biol.">
        <title>Multicopy STS1 restores both protein transport and ribosomal RNA stability in a new yeast sec23 mutant allele.</title>
        <authorList>
            <person name="Liang S."/>
            <person name="Lacroute F."/>
            <person name="Kepes F."/>
        </authorList>
    </citation>
    <scope>NUCLEOTIDE SEQUENCE [GENOMIC DNA]</scope>
    <scope>FUNCTION</scope>
    <scope>SUBCELLULAR LOCATION</scope>
</reference>
<reference key="3">
    <citation type="journal article" date="1995" name="Yeast">
        <title>Nucleotide sequence and analysis of the centromeric region of yeast chromosome IX.</title>
        <authorList>
            <person name="Voss H."/>
            <person name="Tamames J."/>
            <person name="Teodoru C."/>
            <person name="Valencia A."/>
            <person name="Sensen C."/>
            <person name="Wiemann S."/>
            <person name="Schwager C."/>
            <person name="Zimmermann J."/>
            <person name="Sander C."/>
            <person name="Ansorge W."/>
        </authorList>
    </citation>
    <scope>NUCLEOTIDE SEQUENCE [GENOMIC DNA]</scope>
    <source>
        <strain>ATCC 204508 / S288c</strain>
    </source>
</reference>
<reference key="4">
    <citation type="journal article" date="1997" name="Nature">
        <title>The nucleotide sequence of Saccharomyces cerevisiae chromosome IX.</title>
        <authorList>
            <person name="Churcher C.M."/>
            <person name="Bowman S."/>
            <person name="Badcock K."/>
            <person name="Bankier A.T."/>
            <person name="Brown D."/>
            <person name="Chillingworth T."/>
            <person name="Connor R."/>
            <person name="Devlin K."/>
            <person name="Gentles S."/>
            <person name="Hamlin N."/>
            <person name="Harris D.E."/>
            <person name="Horsnell T."/>
            <person name="Hunt S."/>
            <person name="Jagels K."/>
            <person name="Jones M."/>
            <person name="Lye G."/>
            <person name="Moule S."/>
            <person name="Odell C."/>
            <person name="Pearson D."/>
            <person name="Rajandream M.A."/>
            <person name="Rice P."/>
            <person name="Rowley N."/>
            <person name="Skelton J."/>
            <person name="Smith V."/>
            <person name="Walsh S.V."/>
            <person name="Whitehead S."/>
            <person name="Barrell B.G."/>
        </authorList>
    </citation>
    <scope>NUCLEOTIDE SEQUENCE [LARGE SCALE GENOMIC DNA]</scope>
    <source>
        <strain>ATCC 204508 / S288c</strain>
    </source>
</reference>
<reference key="5">
    <citation type="journal article" date="2014" name="G3 (Bethesda)">
        <title>The reference genome sequence of Saccharomyces cerevisiae: Then and now.</title>
        <authorList>
            <person name="Engel S.R."/>
            <person name="Dietrich F.S."/>
            <person name="Fisk D.G."/>
            <person name="Binkley G."/>
            <person name="Balakrishnan R."/>
            <person name="Costanzo M.C."/>
            <person name="Dwight S.S."/>
            <person name="Hitz B.C."/>
            <person name="Karra K."/>
            <person name="Nash R.S."/>
            <person name="Weng S."/>
            <person name="Wong E.D."/>
            <person name="Lloyd P."/>
            <person name="Skrzypek M.S."/>
            <person name="Miyasato S.R."/>
            <person name="Simison M."/>
            <person name="Cherry J.M."/>
        </authorList>
    </citation>
    <scope>GENOME REANNOTATION</scope>
    <source>
        <strain>ATCC 204508 / S288c</strain>
    </source>
</reference>
<reference key="6">
    <citation type="journal article" date="2007" name="Genome Res.">
        <title>Approaching a complete repository of sequence-verified protein-encoding clones for Saccharomyces cerevisiae.</title>
        <authorList>
            <person name="Hu Y."/>
            <person name="Rolfs A."/>
            <person name="Bhullar B."/>
            <person name="Murthy T.V.S."/>
            <person name="Zhu C."/>
            <person name="Berger M.F."/>
            <person name="Camargo A.A."/>
            <person name="Kelley F."/>
            <person name="McCarron S."/>
            <person name="Jepson D."/>
            <person name="Richardson A."/>
            <person name="Raphael J."/>
            <person name="Moreira D."/>
            <person name="Taycher E."/>
            <person name="Zuo D."/>
            <person name="Mohr S."/>
            <person name="Kane M.F."/>
            <person name="Williamson J."/>
            <person name="Simpson A.J.G."/>
            <person name="Bulyk M.L."/>
            <person name="Harlow E."/>
            <person name="Marsischky G."/>
            <person name="Kolodner R.D."/>
            <person name="LaBaer J."/>
        </authorList>
    </citation>
    <scope>NUCLEOTIDE SEQUENCE [GENOMIC DNA]</scope>
    <source>
        <strain>ATCC 204508 / S288c</strain>
    </source>
</reference>
<reference key="7">
    <citation type="journal article" date="1996" name="Mol. Gen. Genet.">
        <title>Mutations in STS1 suppress the defect in 3' mRNA processing caused by the rna15-2 mutation in Saccharomyces cerevisiae.</title>
        <authorList>
            <person name="Amrani N."/>
            <person name="Dufour M.E."/>
            <person name="Bonneaud N."/>
            <person name="Lacroute F."/>
        </authorList>
    </citation>
    <scope>FUNCTION</scope>
    <scope>SUBCELLULAR LOCATION</scope>
</reference>
<reference key="8">
    <citation type="journal article" date="2000" name="Mol. Cell. Biol.">
        <title>Evidence for separable functions of Srp1p, the yeast homolog of importin alpha (Karyopherin alpha): role for Srp1p and Sts1p in protein degradation.</title>
        <authorList>
            <person name="Tabb M.M."/>
            <person name="Tongaonkar P."/>
            <person name="Vu L."/>
            <person name="Nomura M."/>
        </authorList>
    </citation>
    <scope>FUNCTION</scope>
    <scope>INTERACTION WITH SRP1</scope>
</reference>
<reference key="9">
    <citation type="journal article" date="2003" name="Nature">
        <title>Global analysis of protein expression in yeast.</title>
        <authorList>
            <person name="Ghaemmaghami S."/>
            <person name="Huh W.-K."/>
            <person name="Bower K."/>
            <person name="Howson R.W."/>
            <person name="Belle A."/>
            <person name="Dephoure N."/>
            <person name="O'Shea E.K."/>
            <person name="Weissman J.S."/>
        </authorList>
    </citation>
    <scope>LEVEL OF PROTEIN EXPRESSION [LARGE SCALE ANALYSIS]</scope>
</reference>
<reference key="10">
    <citation type="journal article" date="2007" name="J. Biol. Chem.">
        <title>Sts1 can overcome the loss of Rad23 and Rpn10 and represents a novel regulator of the ubiquitin/proteasome pathway.</title>
        <authorList>
            <person name="Romero-Perez L."/>
            <person name="Chen L."/>
            <person name="Lambertson D."/>
            <person name="Madura K."/>
        </authorList>
    </citation>
    <scope>FUNCTION</scope>
    <scope>PROTEASOME-BINDING</scope>
</reference>
<reference key="11">
    <citation type="journal article" date="2011" name="J. Biol. Chem.">
        <title>Sts1 plays a key role in targeting proteasomes to the nucleus.</title>
        <authorList>
            <person name="Chen L."/>
            <person name="Romero L."/>
            <person name="Chuang S.M."/>
            <person name="Tournier V."/>
            <person name="Joshi K.K."/>
            <person name="Lee J.A."/>
            <person name="Kovvali G."/>
            <person name="Madura K."/>
        </authorList>
    </citation>
    <scope>FUNCTION</scope>
    <scope>SUBCELLULAR LOCATION</scope>
    <scope>INTERACTION WITH RPN11 AND SRP1</scope>
</reference>
<keyword id="KW-0963">Cytoplasm</keyword>
<keyword id="KW-0539">Nucleus</keyword>
<keyword id="KW-0653">Protein transport</keyword>
<keyword id="KW-1185">Reference proteome</keyword>
<keyword id="KW-0813">Transport</keyword>
<proteinExistence type="evidence at protein level"/>
<dbReference type="EMBL" id="Z37996">
    <property type="protein sequence ID" value="CAA86081.1"/>
    <property type="molecule type" value="Genomic_DNA"/>
</dbReference>
<dbReference type="EMBL" id="U12437">
    <property type="protein sequence ID" value="AAA21413.1"/>
    <property type="molecule type" value="Genomic_DNA"/>
</dbReference>
<dbReference type="EMBL" id="X79743">
    <property type="protein sequence ID" value="CAB38099.1"/>
    <property type="molecule type" value="Genomic_DNA"/>
</dbReference>
<dbReference type="EMBL" id="X75916">
    <property type="protein sequence ID" value="CAA53515.1"/>
    <property type="molecule type" value="Genomic_DNA"/>
</dbReference>
<dbReference type="EMBL" id="AY557878">
    <property type="protein sequence ID" value="AAS56204.1"/>
    <property type="molecule type" value="Genomic_DNA"/>
</dbReference>
<dbReference type="EMBL" id="BK006942">
    <property type="protein sequence ID" value="DAA08557.1"/>
    <property type="molecule type" value="Genomic_DNA"/>
</dbReference>
<dbReference type="PIR" id="S48355">
    <property type="entry name" value="S48355"/>
</dbReference>
<dbReference type="RefSeq" id="NP_012276.1">
    <property type="nucleotide sequence ID" value="NM_001179533.1"/>
</dbReference>
<dbReference type="SMR" id="P38637"/>
<dbReference type="BioGRID" id="35003">
    <property type="interactions" value="401"/>
</dbReference>
<dbReference type="DIP" id="DIP-7670N"/>
<dbReference type="FunCoup" id="P38637">
    <property type="interactions" value="23"/>
</dbReference>
<dbReference type="IntAct" id="P38637">
    <property type="interactions" value="3"/>
</dbReference>
<dbReference type="STRING" id="4932.YIR011C"/>
<dbReference type="PaxDb" id="4932-YIR011C"/>
<dbReference type="PeptideAtlas" id="P38637"/>
<dbReference type="EnsemblFungi" id="YIR011C_mRNA">
    <property type="protein sequence ID" value="YIR011C"/>
    <property type="gene ID" value="YIR011C"/>
</dbReference>
<dbReference type="GeneID" id="854828"/>
<dbReference type="KEGG" id="sce:YIR011C"/>
<dbReference type="AGR" id="SGD:S000001450"/>
<dbReference type="SGD" id="S000001450">
    <property type="gene designation" value="STS1"/>
</dbReference>
<dbReference type="VEuPathDB" id="FungiDB:YIR011C"/>
<dbReference type="eggNOG" id="ENOG502RNK4">
    <property type="taxonomic scope" value="Eukaryota"/>
</dbReference>
<dbReference type="HOGENOM" id="CLU_054606_1_0_1"/>
<dbReference type="InParanoid" id="P38637"/>
<dbReference type="OMA" id="DYTPHFL"/>
<dbReference type="OrthoDB" id="10061064at2759"/>
<dbReference type="BioCyc" id="YEAST:G3O-31432-MONOMER"/>
<dbReference type="BioGRID-ORCS" id="854828">
    <property type="hits" value="0 hits in 10 CRISPR screens"/>
</dbReference>
<dbReference type="PRO" id="PR:P38637"/>
<dbReference type="Proteomes" id="UP000002311">
    <property type="component" value="Chromosome IX"/>
</dbReference>
<dbReference type="RNAct" id="P38637">
    <property type="molecule type" value="protein"/>
</dbReference>
<dbReference type="GO" id="GO:0005737">
    <property type="term" value="C:cytoplasm"/>
    <property type="evidence" value="ECO:0007669"/>
    <property type="project" value="UniProtKB-SubCell"/>
</dbReference>
<dbReference type="GO" id="GO:0005634">
    <property type="term" value="C:nucleus"/>
    <property type="evidence" value="ECO:0000314"/>
    <property type="project" value="SGD"/>
</dbReference>
<dbReference type="GO" id="GO:0070628">
    <property type="term" value="F:proteasome binding"/>
    <property type="evidence" value="ECO:0000314"/>
    <property type="project" value="SGD"/>
</dbReference>
<dbReference type="GO" id="GO:0007059">
    <property type="term" value="P:chromosome segregation"/>
    <property type="evidence" value="ECO:0000315"/>
    <property type="project" value="SGD"/>
</dbReference>
<dbReference type="GO" id="GO:0071630">
    <property type="term" value="P:nuclear protein quality control by the ubiquitin-proteasome system"/>
    <property type="evidence" value="ECO:0000315"/>
    <property type="project" value="SGD"/>
</dbReference>
<dbReference type="GO" id="GO:0031144">
    <property type="term" value="P:proteasome localization"/>
    <property type="evidence" value="ECO:0000315"/>
    <property type="project" value="SGD"/>
</dbReference>
<dbReference type="GO" id="GO:0015031">
    <property type="term" value="P:protein transport"/>
    <property type="evidence" value="ECO:0007669"/>
    <property type="project" value="UniProtKB-KW"/>
</dbReference>
<dbReference type="FunFam" id="1.20.58.1590:FF:000003">
    <property type="entry name" value="Tethering factor for nuclear proteasome STS1"/>
    <property type="match status" value="1"/>
</dbReference>
<dbReference type="Gene3D" id="1.20.58.1590">
    <property type="entry name" value="Tethering factor for nuclear proteasome Cut8/Sts1"/>
    <property type="match status" value="1"/>
</dbReference>
<dbReference type="InterPro" id="IPR013868">
    <property type="entry name" value="Cut8/Sts1_fam"/>
</dbReference>
<dbReference type="InterPro" id="IPR038422">
    <property type="entry name" value="Cut8/Sts1_sf"/>
</dbReference>
<dbReference type="PANTHER" id="PTHR28032">
    <property type="entry name" value="FI02826P"/>
    <property type="match status" value="1"/>
</dbReference>
<dbReference type="PANTHER" id="PTHR28032:SF1">
    <property type="entry name" value="FI02826P"/>
    <property type="match status" value="1"/>
</dbReference>
<dbReference type="Pfam" id="PF08559">
    <property type="entry name" value="Cut8"/>
    <property type="match status" value="1"/>
</dbReference>
<evidence type="ECO:0000256" key="1">
    <source>
        <dbReference type="SAM" id="MobiDB-lite"/>
    </source>
</evidence>
<evidence type="ECO:0000269" key="2">
    <source>
    </source>
</evidence>
<evidence type="ECO:0000269" key="3">
    <source>
    </source>
</evidence>
<evidence type="ECO:0000269" key="4">
    <source>
    </source>
</evidence>
<evidence type="ECO:0000269" key="5">
    <source>
    </source>
</evidence>
<evidence type="ECO:0000269" key="6">
    <source>
    </source>
</evidence>
<evidence type="ECO:0000269" key="7">
    <source>
    </source>
</evidence>
<evidence type="ECO:0000269" key="8">
    <source>
    </source>
</evidence>
<evidence type="ECO:0000305" key="9"/>
<accession>P38637</accession>
<accession>D6VVU1</accession>
<accession>P35188</accession>
<organism>
    <name type="scientific">Saccharomyces cerevisiae (strain ATCC 204508 / S288c)</name>
    <name type="common">Baker's yeast</name>
    <dbReference type="NCBI Taxonomy" id="559292"/>
    <lineage>
        <taxon>Eukaryota</taxon>
        <taxon>Fungi</taxon>
        <taxon>Dikarya</taxon>
        <taxon>Ascomycota</taxon>
        <taxon>Saccharomycotina</taxon>
        <taxon>Saccharomycetes</taxon>
        <taxon>Saccharomycetales</taxon>
        <taxon>Saccharomycetaceae</taxon>
        <taxon>Saccharomyces</taxon>
    </lineage>
</organism>
<name>STS1_YEAST</name>
<comment type="function">
    <text evidence="2 4 5 6 7 8">Involved in ubiquitin-mediated protein degradation. Regulatory factor in the ubiquitin/proteasome pathway that controls the turnover of proteasome substrates. Targets proteasomes to the nucleus and facilitates the degradation of nuclear proteins. Required for efficient chromosome segregation. Restores protein transport and ribosomal RNA stability.</text>
</comment>
<comment type="subunit">
    <text evidence="2 5">Binds the proteasome. Interacts with karyopherin SRP1 and proteasome subunit RPN11.</text>
</comment>
<comment type="subcellular location">
    <subcellularLocation>
        <location>Cytoplasm</location>
    </subcellularLocation>
    <subcellularLocation>
        <location>Nucleus</location>
    </subcellularLocation>
</comment>
<comment type="miscellaneous">
    <text evidence="3">Present with 2120 molecules/cell in log phase SD medium.</text>
</comment>
<comment type="similarity">
    <text evidence="9">Belongs to the cut8/STS1 family.</text>
</comment>